<keyword id="KW-0963">Cytoplasm</keyword>
<keyword id="KW-0312">Gluconeogenesis</keyword>
<keyword id="KW-0324">Glycolysis</keyword>
<keyword id="KW-0413">Isomerase</keyword>
<keyword id="KW-1185">Reference proteome</keyword>
<organism>
    <name type="scientific">Streptococcus gordonii (strain Challis / ATCC 35105 / BCRC 15272 / CH1 / DL1 / V288)</name>
    <dbReference type="NCBI Taxonomy" id="467705"/>
    <lineage>
        <taxon>Bacteria</taxon>
        <taxon>Bacillati</taxon>
        <taxon>Bacillota</taxon>
        <taxon>Bacilli</taxon>
        <taxon>Lactobacillales</taxon>
        <taxon>Streptococcaceae</taxon>
        <taxon>Streptococcus</taxon>
    </lineage>
</organism>
<name>TPIS_STRGC</name>
<feature type="chain" id="PRO_1000076666" description="Triosephosphate isomerase">
    <location>
        <begin position="1"/>
        <end position="252"/>
    </location>
</feature>
<feature type="active site" description="Electrophile" evidence="1">
    <location>
        <position position="96"/>
    </location>
</feature>
<feature type="active site" description="Proton acceptor" evidence="1">
    <location>
        <position position="168"/>
    </location>
</feature>
<feature type="binding site" evidence="1">
    <location>
        <begin position="10"/>
        <end position="12"/>
    </location>
    <ligand>
        <name>substrate</name>
    </ligand>
</feature>
<feature type="binding site" evidence="1">
    <location>
        <position position="174"/>
    </location>
    <ligand>
        <name>substrate</name>
    </ligand>
</feature>
<feature type="binding site" evidence="1">
    <location>
        <position position="214"/>
    </location>
    <ligand>
        <name>substrate</name>
    </ligand>
</feature>
<feature type="binding site" evidence="1">
    <location>
        <begin position="235"/>
        <end position="236"/>
    </location>
    <ligand>
        <name>substrate</name>
    </ligand>
</feature>
<proteinExistence type="inferred from homology"/>
<sequence>MSRKPFIAGNWKMNKNPEEAKAFVEAVASKLPSSDLVEAGIAAPAVDLTAVLAAAKGSNLKVAAQNCYFENSGAFTGETSPQVLKEIGTDYVVIGHSERRDYFHETDEDINKKAKAIFANGMLPIICCGESLETYEAGKAAEFVGAQVSAALAGLTAEQVASTVIAYEPIWAIGTGKSASQDDAQKMCKVVRDVVAADFGQEVADKVRVQYGGSVKPENVASYMACPDVDGALVGGASLEAESFLALLDFVK</sequence>
<reference key="1">
    <citation type="journal article" date="2007" name="J. Bacteriol.">
        <title>Genome-wide transcriptional changes in Streptococcus gordonii in response to competence signaling peptide.</title>
        <authorList>
            <person name="Vickerman M.M."/>
            <person name="Iobst S."/>
            <person name="Jesionowski A.M."/>
            <person name="Gill S.R."/>
        </authorList>
    </citation>
    <scope>NUCLEOTIDE SEQUENCE [LARGE SCALE GENOMIC DNA]</scope>
    <source>
        <strain>Challis / ATCC 35105 / BCRC 15272 / CH1 / DL1 / V288</strain>
    </source>
</reference>
<evidence type="ECO:0000255" key="1">
    <source>
        <dbReference type="HAMAP-Rule" id="MF_00147"/>
    </source>
</evidence>
<dbReference type="EC" id="5.3.1.1" evidence="1"/>
<dbReference type="EMBL" id="CP000725">
    <property type="protein sequence ID" value="ABV10628.1"/>
    <property type="molecule type" value="Genomic_DNA"/>
</dbReference>
<dbReference type="RefSeq" id="WP_012000225.1">
    <property type="nucleotide sequence ID" value="NC_009785.1"/>
</dbReference>
<dbReference type="SMR" id="A8AWA1"/>
<dbReference type="STRING" id="467705.SGO_0762"/>
<dbReference type="KEGG" id="sgo:SGO_0762"/>
<dbReference type="eggNOG" id="COG0149">
    <property type="taxonomic scope" value="Bacteria"/>
</dbReference>
<dbReference type="HOGENOM" id="CLU_024251_2_3_9"/>
<dbReference type="UniPathway" id="UPA00109">
    <property type="reaction ID" value="UER00189"/>
</dbReference>
<dbReference type="UniPathway" id="UPA00138"/>
<dbReference type="Proteomes" id="UP000001131">
    <property type="component" value="Chromosome"/>
</dbReference>
<dbReference type="GO" id="GO:0005829">
    <property type="term" value="C:cytosol"/>
    <property type="evidence" value="ECO:0007669"/>
    <property type="project" value="TreeGrafter"/>
</dbReference>
<dbReference type="GO" id="GO:0004807">
    <property type="term" value="F:triose-phosphate isomerase activity"/>
    <property type="evidence" value="ECO:0007669"/>
    <property type="project" value="UniProtKB-UniRule"/>
</dbReference>
<dbReference type="GO" id="GO:0006094">
    <property type="term" value="P:gluconeogenesis"/>
    <property type="evidence" value="ECO:0007669"/>
    <property type="project" value="UniProtKB-UniRule"/>
</dbReference>
<dbReference type="GO" id="GO:0046166">
    <property type="term" value="P:glyceraldehyde-3-phosphate biosynthetic process"/>
    <property type="evidence" value="ECO:0007669"/>
    <property type="project" value="TreeGrafter"/>
</dbReference>
<dbReference type="GO" id="GO:0019563">
    <property type="term" value="P:glycerol catabolic process"/>
    <property type="evidence" value="ECO:0007669"/>
    <property type="project" value="TreeGrafter"/>
</dbReference>
<dbReference type="GO" id="GO:0006096">
    <property type="term" value="P:glycolytic process"/>
    <property type="evidence" value="ECO:0007669"/>
    <property type="project" value="UniProtKB-UniRule"/>
</dbReference>
<dbReference type="CDD" id="cd00311">
    <property type="entry name" value="TIM"/>
    <property type="match status" value="1"/>
</dbReference>
<dbReference type="FunFam" id="3.20.20.70:FF:000016">
    <property type="entry name" value="Triosephosphate isomerase"/>
    <property type="match status" value="1"/>
</dbReference>
<dbReference type="Gene3D" id="3.20.20.70">
    <property type="entry name" value="Aldolase class I"/>
    <property type="match status" value="1"/>
</dbReference>
<dbReference type="HAMAP" id="MF_00147_B">
    <property type="entry name" value="TIM_B"/>
    <property type="match status" value="1"/>
</dbReference>
<dbReference type="InterPro" id="IPR013785">
    <property type="entry name" value="Aldolase_TIM"/>
</dbReference>
<dbReference type="InterPro" id="IPR035990">
    <property type="entry name" value="TIM_sf"/>
</dbReference>
<dbReference type="InterPro" id="IPR022896">
    <property type="entry name" value="TrioseP_Isoase_bac/euk"/>
</dbReference>
<dbReference type="InterPro" id="IPR000652">
    <property type="entry name" value="Triosephosphate_isomerase"/>
</dbReference>
<dbReference type="InterPro" id="IPR020861">
    <property type="entry name" value="Triosephosphate_isomerase_AS"/>
</dbReference>
<dbReference type="NCBIfam" id="TIGR00419">
    <property type="entry name" value="tim"/>
    <property type="match status" value="1"/>
</dbReference>
<dbReference type="PANTHER" id="PTHR21139">
    <property type="entry name" value="TRIOSEPHOSPHATE ISOMERASE"/>
    <property type="match status" value="1"/>
</dbReference>
<dbReference type="PANTHER" id="PTHR21139:SF42">
    <property type="entry name" value="TRIOSEPHOSPHATE ISOMERASE"/>
    <property type="match status" value="1"/>
</dbReference>
<dbReference type="Pfam" id="PF00121">
    <property type="entry name" value="TIM"/>
    <property type="match status" value="1"/>
</dbReference>
<dbReference type="SUPFAM" id="SSF51351">
    <property type="entry name" value="Triosephosphate isomerase (TIM)"/>
    <property type="match status" value="1"/>
</dbReference>
<dbReference type="PROSITE" id="PS00171">
    <property type="entry name" value="TIM_1"/>
    <property type="match status" value="1"/>
</dbReference>
<dbReference type="PROSITE" id="PS51440">
    <property type="entry name" value="TIM_2"/>
    <property type="match status" value="1"/>
</dbReference>
<accession>A8AWA1</accession>
<gene>
    <name evidence="1" type="primary">tpiA</name>
    <name type="ordered locus">SGO_0762</name>
</gene>
<protein>
    <recommendedName>
        <fullName evidence="1">Triosephosphate isomerase</fullName>
        <shortName evidence="1">TIM</shortName>
        <shortName evidence="1">TPI</shortName>
        <ecNumber evidence="1">5.3.1.1</ecNumber>
    </recommendedName>
    <alternativeName>
        <fullName evidence="1">Triose-phosphate isomerase</fullName>
    </alternativeName>
</protein>
<comment type="function">
    <text evidence="1">Involved in the gluconeogenesis. Catalyzes stereospecifically the conversion of dihydroxyacetone phosphate (DHAP) to D-glyceraldehyde-3-phosphate (G3P).</text>
</comment>
<comment type="catalytic activity">
    <reaction evidence="1">
        <text>D-glyceraldehyde 3-phosphate = dihydroxyacetone phosphate</text>
        <dbReference type="Rhea" id="RHEA:18585"/>
        <dbReference type="ChEBI" id="CHEBI:57642"/>
        <dbReference type="ChEBI" id="CHEBI:59776"/>
        <dbReference type="EC" id="5.3.1.1"/>
    </reaction>
</comment>
<comment type="pathway">
    <text evidence="1">Carbohydrate biosynthesis; gluconeogenesis.</text>
</comment>
<comment type="pathway">
    <text evidence="1">Carbohydrate degradation; glycolysis; D-glyceraldehyde 3-phosphate from glycerone phosphate: step 1/1.</text>
</comment>
<comment type="subunit">
    <text evidence="1">Homodimer.</text>
</comment>
<comment type="subcellular location">
    <subcellularLocation>
        <location evidence="1">Cytoplasm</location>
    </subcellularLocation>
</comment>
<comment type="similarity">
    <text evidence="1">Belongs to the triosephosphate isomerase family.</text>
</comment>